<sequence length="328" mass="35683">MPDRGGENGASCSVGRWSAEEARAIYNLPFNDLLFRAHGLHRENFDPNRIQLSKLLNIKTGGCPEDCGYCSQSASAENGLKASKLMEIETVLEEARKAKAAGATRYCMGAAWRSPKDRDMPALTHMIESVKAMGLETCMTLGMLDSDKAEKLADAGLDYYNHNIDTSERFYPAVITTRSFEDRLDTLANVRNAGIKVCSGGILGLGEETEDRIDMLVTLANLPEPPESVPINMLIPMPGTRLAKAAPVDPLEFVRVVALARILMPKSHVRLTAGRTAMSDEMQALCFFAGANSLFMGDTLLTAANPGDDRDSSLLRRLGIQAETEQPA</sequence>
<gene>
    <name evidence="1" type="primary">bioB</name>
    <name type="ordered locus">BOV_A0430</name>
</gene>
<evidence type="ECO:0000255" key="1">
    <source>
        <dbReference type="HAMAP-Rule" id="MF_01694"/>
    </source>
</evidence>
<evidence type="ECO:0000255" key="2">
    <source>
        <dbReference type="PROSITE-ProRule" id="PRU01266"/>
    </source>
</evidence>
<evidence type="ECO:0000305" key="3"/>
<keyword id="KW-0001">2Fe-2S</keyword>
<keyword id="KW-0004">4Fe-4S</keyword>
<keyword id="KW-0093">Biotin biosynthesis</keyword>
<keyword id="KW-0408">Iron</keyword>
<keyword id="KW-0411">Iron-sulfur</keyword>
<keyword id="KW-0479">Metal-binding</keyword>
<keyword id="KW-0949">S-adenosyl-L-methionine</keyword>
<keyword id="KW-0808">Transferase</keyword>
<organism>
    <name type="scientific">Brucella ovis (strain ATCC 25840 / 63/290 / NCTC 10512)</name>
    <dbReference type="NCBI Taxonomy" id="444178"/>
    <lineage>
        <taxon>Bacteria</taxon>
        <taxon>Pseudomonadati</taxon>
        <taxon>Pseudomonadota</taxon>
        <taxon>Alphaproteobacteria</taxon>
        <taxon>Hyphomicrobiales</taxon>
        <taxon>Brucellaceae</taxon>
        <taxon>Brucella/Ochrobactrum group</taxon>
        <taxon>Brucella</taxon>
    </lineage>
</organism>
<protein>
    <recommendedName>
        <fullName evidence="1">Biotin synthase</fullName>
        <ecNumber evidence="1">2.8.1.6</ecNumber>
    </recommendedName>
</protein>
<feature type="chain" id="PRO_0000381253" description="Biotin synthase">
    <location>
        <begin position="1"/>
        <end position="328"/>
    </location>
</feature>
<feature type="domain" description="Radical SAM core" evidence="2">
    <location>
        <begin position="48"/>
        <end position="275"/>
    </location>
</feature>
<feature type="binding site" evidence="1">
    <location>
        <position position="63"/>
    </location>
    <ligand>
        <name>[4Fe-4S] cluster</name>
        <dbReference type="ChEBI" id="CHEBI:49883"/>
        <note>4Fe-4S-S-AdoMet</note>
    </ligand>
</feature>
<feature type="binding site" evidence="1">
    <location>
        <position position="67"/>
    </location>
    <ligand>
        <name>[4Fe-4S] cluster</name>
        <dbReference type="ChEBI" id="CHEBI:49883"/>
        <note>4Fe-4S-S-AdoMet</note>
    </ligand>
</feature>
<feature type="binding site" evidence="1">
    <location>
        <position position="70"/>
    </location>
    <ligand>
        <name>[4Fe-4S] cluster</name>
        <dbReference type="ChEBI" id="CHEBI:49883"/>
        <note>4Fe-4S-S-AdoMet</note>
    </ligand>
</feature>
<feature type="binding site" evidence="1">
    <location>
        <position position="107"/>
    </location>
    <ligand>
        <name>[2Fe-2S] cluster</name>
        <dbReference type="ChEBI" id="CHEBI:190135"/>
    </ligand>
</feature>
<feature type="binding site" evidence="1">
    <location>
        <position position="138"/>
    </location>
    <ligand>
        <name>[2Fe-2S] cluster</name>
        <dbReference type="ChEBI" id="CHEBI:190135"/>
    </ligand>
</feature>
<feature type="binding site" evidence="1">
    <location>
        <position position="198"/>
    </location>
    <ligand>
        <name>[2Fe-2S] cluster</name>
        <dbReference type="ChEBI" id="CHEBI:190135"/>
    </ligand>
</feature>
<feature type="binding site" evidence="1">
    <location>
        <position position="270"/>
    </location>
    <ligand>
        <name>[2Fe-2S] cluster</name>
        <dbReference type="ChEBI" id="CHEBI:190135"/>
    </ligand>
</feature>
<accession>A5VUG1</accession>
<comment type="function">
    <text evidence="1">Catalyzes the conversion of dethiobiotin (DTB) to biotin by the insertion of a sulfur atom into dethiobiotin via a radical-based mechanism.</text>
</comment>
<comment type="catalytic activity">
    <reaction evidence="1">
        <text>(4R,5S)-dethiobiotin + (sulfur carrier)-SH + 2 reduced [2Fe-2S]-[ferredoxin] + 2 S-adenosyl-L-methionine = (sulfur carrier)-H + biotin + 2 5'-deoxyadenosine + 2 L-methionine + 2 oxidized [2Fe-2S]-[ferredoxin]</text>
        <dbReference type="Rhea" id="RHEA:22060"/>
        <dbReference type="Rhea" id="RHEA-COMP:10000"/>
        <dbReference type="Rhea" id="RHEA-COMP:10001"/>
        <dbReference type="Rhea" id="RHEA-COMP:14737"/>
        <dbReference type="Rhea" id="RHEA-COMP:14739"/>
        <dbReference type="ChEBI" id="CHEBI:17319"/>
        <dbReference type="ChEBI" id="CHEBI:29917"/>
        <dbReference type="ChEBI" id="CHEBI:33737"/>
        <dbReference type="ChEBI" id="CHEBI:33738"/>
        <dbReference type="ChEBI" id="CHEBI:57586"/>
        <dbReference type="ChEBI" id="CHEBI:57844"/>
        <dbReference type="ChEBI" id="CHEBI:59789"/>
        <dbReference type="ChEBI" id="CHEBI:64428"/>
        <dbReference type="ChEBI" id="CHEBI:149473"/>
        <dbReference type="EC" id="2.8.1.6"/>
    </reaction>
</comment>
<comment type="cofactor">
    <cofactor evidence="1">
        <name>[4Fe-4S] cluster</name>
        <dbReference type="ChEBI" id="CHEBI:49883"/>
    </cofactor>
    <text evidence="1">Binds 1 [4Fe-4S] cluster. The cluster is coordinated with 3 cysteines and an exchangeable S-adenosyl-L-methionine.</text>
</comment>
<comment type="cofactor">
    <cofactor evidence="1">
        <name>[2Fe-2S] cluster</name>
        <dbReference type="ChEBI" id="CHEBI:190135"/>
    </cofactor>
    <text evidence="1">Binds 1 [2Fe-2S] cluster. The cluster is coordinated with 3 cysteines and 1 arginine.</text>
</comment>
<comment type="pathway">
    <text evidence="1">Cofactor biosynthesis; biotin biosynthesis; biotin from 7,8-diaminononanoate: step 2/2.</text>
</comment>
<comment type="subunit">
    <text evidence="1">Homodimer.</text>
</comment>
<comment type="similarity">
    <text evidence="1">Belongs to the radical SAM superfamily. Biotin synthase family.</text>
</comment>
<comment type="sequence caution" evidence="3">
    <conflict type="erroneous initiation">
        <sequence resource="EMBL-CDS" id="ABQ62437"/>
    </conflict>
</comment>
<name>BIOB_BRUO2</name>
<proteinExistence type="inferred from homology"/>
<reference key="1">
    <citation type="journal article" date="2009" name="PLoS ONE">
        <title>Genome degradation in Brucella ovis corresponds with narrowing of its host range and tissue tropism.</title>
        <authorList>
            <person name="Tsolis R.M."/>
            <person name="Seshadri R."/>
            <person name="Santos R.L."/>
            <person name="Sangari F.J."/>
            <person name="Lobo J.M."/>
            <person name="de Jong M.F."/>
            <person name="Ren Q."/>
            <person name="Myers G."/>
            <person name="Brinkac L.M."/>
            <person name="Nelson W.C."/>
            <person name="Deboy R.T."/>
            <person name="Angiuoli S."/>
            <person name="Khouri H."/>
            <person name="Dimitrov G."/>
            <person name="Robinson J.R."/>
            <person name="Mulligan S."/>
            <person name="Walker R.L."/>
            <person name="Elzer P.E."/>
            <person name="Hassan K.A."/>
            <person name="Paulsen I.T."/>
        </authorList>
    </citation>
    <scope>NUCLEOTIDE SEQUENCE [LARGE SCALE GENOMIC DNA]</scope>
    <source>
        <strain>ATCC 25840 / 63/290 / NCTC 10512</strain>
    </source>
</reference>
<dbReference type="EC" id="2.8.1.6" evidence="1"/>
<dbReference type="EMBL" id="CP000709">
    <property type="protein sequence ID" value="ABQ62437.1"/>
    <property type="status" value="ALT_INIT"/>
    <property type="molecule type" value="Genomic_DNA"/>
</dbReference>
<dbReference type="RefSeq" id="WP_006015789.1">
    <property type="nucleotide sequence ID" value="NC_009504.1"/>
</dbReference>
<dbReference type="SMR" id="A5VUG1"/>
<dbReference type="GeneID" id="45125832"/>
<dbReference type="KEGG" id="bov:BOV_A0430"/>
<dbReference type="HOGENOM" id="CLU_033172_1_2_5"/>
<dbReference type="UniPathway" id="UPA00078">
    <property type="reaction ID" value="UER00162"/>
</dbReference>
<dbReference type="Proteomes" id="UP000006383">
    <property type="component" value="Chromosome II"/>
</dbReference>
<dbReference type="GO" id="GO:0051537">
    <property type="term" value="F:2 iron, 2 sulfur cluster binding"/>
    <property type="evidence" value="ECO:0007669"/>
    <property type="project" value="UniProtKB-KW"/>
</dbReference>
<dbReference type="GO" id="GO:0051539">
    <property type="term" value="F:4 iron, 4 sulfur cluster binding"/>
    <property type="evidence" value="ECO:0007669"/>
    <property type="project" value="UniProtKB-KW"/>
</dbReference>
<dbReference type="GO" id="GO:0004076">
    <property type="term" value="F:biotin synthase activity"/>
    <property type="evidence" value="ECO:0007669"/>
    <property type="project" value="UniProtKB-UniRule"/>
</dbReference>
<dbReference type="GO" id="GO:0005506">
    <property type="term" value="F:iron ion binding"/>
    <property type="evidence" value="ECO:0007669"/>
    <property type="project" value="UniProtKB-UniRule"/>
</dbReference>
<dbReference type="GO" id="GO:0009102">
    <property type="term" value="P:biotin biosynthetic process"/>
    <property type="evidence" value="ECO:0007669"/>
    <property type="project" value="UniProtKB-UniRule"/>
</dbReference>
<dbReference type="CDD" id="cd01335">
    <property type="entry name" value="Radical_SAM"/>
    <property type="match status" value="1"/>
</dbReference>
<dbReference type="Gene3D" id="3.20.20.70">
    <property type="entry name" value="Aldolase class I"/>
    <property type="match status" value="1"/>
</dbReference>
<dbReference type="HAMAP" id="MF_01694">
    <property type="entry name" value="BioB"/>
    <property type="match status" value="1"/>
</dbReference>
<dbReference type="InterPro" id="IPR013785">
    <property type="entry name" value="Aldolase_TIM"/>
</dbReference>
<dbReference type="InterPro" id="IPR010722">
    <property type="entry name" value="BATS_dom"/>
</dbReference>
<dbReference type="InterPro" id="IPR002684">
    <property type="entry name" value="Biotin_synth/BioAB"/>
</dbReference>
<dbReference type="InterPro" id="IPR024177">
    <property type="entry name" value="Biotin_synthase"/>
</dbReference>
<dbReference type="InterPro" id="IPR006638">
    <property type="entry name" value="Elp3/MiaA/NifB-like_rSAM"/>
</dbReference>
<dbReference type="InterPro" id="IPR007197">
    <property type="entry name" value="rSAM"/>
</dbReference>
<dbReference type="NCBIfam" id="TIGR00433">
    <property type="entry name" value="bioB"/>
    <property type="match status" value="1"/>
</dbReference>
<dbReference type="PANTHER" id="PTHR22976">
    <property type="entry name" value="BIOTIN SYNTHASE"/>
    <property type="match status" value="1"/>
</dbReference>
<dbReference type="PANTHER" id="PTHR22976:SF2">
    <property type="entry name" value="BIOTIN SYNTHASE, MITOCHONDRIAL"/>
    <property type="match status" value="1"/>
</dbReference>
<dbReference type="Pfam" id="PF06968">
    <property type="entry name" value="BATS"/>
    <property type="match status" value="1"/>
</dbReference>
<dbReference type="Pfam" id="PF04055">
    <property type="entry name" value="Radical_SAM"/>
    <property type="match status" value="1"/>
</dbReference>
<dbReference type="PIRSF" id="PIRSF001619">
    <property type="entry name" value="Biotin_synth"/>
    <property type="match status" value="1"/>
</dbReference>
<dbReference type="SFLD" id="SFLDF00272">
    <property type="entry name" value="biotin_synthase"/>
    <property type="match status" value="1"/>
</dbReference>
<dbReference type="SFLD" id="SFLDS00029">
    <property type="entry name" value="Radical_SAM"/>
    <property type="match status" value="1"/>
</dbReference>
<dbReference type="SMART" id="SM00876">
    <property type="entry name" value="BATS"/>
    <property type="match status" value="1"/>
</dbReference>
<dbReference type="SMART" id="SM00729">
    <property type="entry name" value="Elp3"/>
    <property type="match status" value="1"/>
</dbReference>
<dbReference type="SUPFAM" id="SSF102114">
    <property type="entry name" value="Radical SAM enzymes"/>
    <property type="match status" value="1"/>
</dbReference>
<dbReference type="PROSITE" id="PS51918">
    <property type="entry name" value="RADICAL_SAM"/>
    <property type="match status" value="1"/>
</dbReference>